<reference key="1">
    <citation type="journal article" date="1991" name="Biochemistry">
        <title>Amino acid sequences and Ca2(+)-binding properties of two isoforms of barnacle troponin C.</title>
        <authorList>
            <person name="Collins J.H."/>
            <person name="Theibert J.L."/>
            <person name="Francois J.-M."/>
            <person name="Ashley C.C."/>
            <person name="Potter J.D."/>
        </authorList>
    </citation>
    <scope>PROTEIN SEQUENCE</scope>
    <scope>ACETYLATION AT SER-1</scope>
</reference>
<organism>
    <name type="scientific">Balanus nubilus</name>
    <name type="common">Giant acorn barnacle</name>
    <dbReference type="NCBI Taxonomy" id="6678"/>
    <lineage>
        <taxon>Eukaryota</taxon>
        <taxon>Metazoa</taxon>
        <taxon>Ecdysozoa</taxon>
        <taxon>Arthropoda</taxon>
        <taxon>Crustacea</taxon>
        <taxon>Multicrustacea</taxon>
        <taxon>Cirripedia</taxon>
        <taxon>Thoracica</taxon>
        <taxon>Thoracicalcarea</taxon>
        <taxon>Balanomorpha</taxon>
        <taxon>Balanoidea</taxon>
        <taxon>Balanidae</taxon>
        <taxon>Balaninae</taxon>
        <taxon>Balanus</taxon>
    </lineage>
</organism>
<protein>
    <recommendedName>
        <fullName>Troponin C, isoform 1</fullName>
    </recommendedName>
</protein>
<comment type="function">
    <text>Troponin is the central regulatory protein of striated muscle contraction. Tn consists of three components: Tn-I which is the inhibitor of actomyosin ATPase, Tn-T which contains the binding site for tropomyosin and Tn-C. The binding of calcium to Tn-C abolishes the inhibitory action of Tn on actin filaments.</text>
</comment>
<comment type="miscellaneous">
    <text>There are two different troponin C in barnacle.</text>
</comment>
<comment type="miscellaneous">
    <text>This protein binds two calcium ions.</text>
</comment>
<comment type="similarity">
    <text evidence="3">Belongs to the troponin C family.</text>
</comment>
<proteinExistence type="evidence at protein level"/>
<sequence length="158" mass="17942">SPDGEYAEETGLEKEQIVVLRRAFDSFDRDKKGYISPETVSDILRMMGIKVSSTSFKQIIEEIDEDGSGQIEFSEFLQLAAKFLIEEDEEAMMKELKEAFRLYDKEGNGYITTQTLKEILHELDARLTAEELVGIIEEIDEDGSGTVDFDEFMAMMTG</sequence>
<keyword id="KW-0007">Acetylation</keyword>
<keyword id="KW-0106">Calcium</keyword>
<keyword id="KW-0903">Direct protein sequencing</keyword>
<keyword id="KW-0479">Metal-binding</keyword>
<keyword id="KW-0514">Muscle protein</keyword>
<keyword id="KW-0677">Repeat</keyword>
<dbReference type="PIR" id="A38397">
    <property type="entry name" value="A38397"/>
</dbReference>
<dbReference type="SMR" id="P21797"/>
<dbReference type="iPTMnet" id="P21797"/>
<dbReference type="GO" id="GO:0016460">
    <property type="term" value="C:myosin II complex"/>
    <property type="evidence" value="ECO:0007669"/>
    <property type="project" value="TreeGrafter"/>
</dbReference>
<dbReference type="GO" id="GO:0005509">
    <property type="term" value="F:calcium ion binding"/>
    <property type="evidence" value="ECO:0007669"/>
    <property type="project" value="InterPro"/>
</dbReference>
<dbReference type="CDD" id="cd00051">
    <property type="entry name" value="EFh"/>
    <property type="match status" value="1"/>
</dbReference>
<dbReference type="FunFam" id="1.10.238.10:FF:000336">
    <property type="entry name" value="HLH domain-containing protein"/>
    <property type="match status" value="1"/>
</dbReference>
<dbReference type="FunFam" id="1.10.238.10:FF:000103">
    <property type="entry name" value="Troponin C Ib"/>
    <property type="match status" value="1"/>
</dbReference>
<dbReference type="Gene3D" id="1.10.238.10">
    <property type="entry name" value="EF-hand"/>
    <property type="match status" value="2"/>
</dbReference>
<dbReference type="InterPro" id="IPR050230">
    <property type="entry name" value="CALM/Myosin/TropC-like"/>
</dbReference>
<dbReference type="InterPro" id="IPR011992">
    <property type="entry name" value="EF-hand-dom_pair"/>
</dbReference>
<dbReference type="InterPro" id="IPR018247">
    <property type="entry name" value="EF_Hand_1_Ca_BS"/>
</dbReference>
<dbReference type="InterPro" id="IPR002048">
    <property type="entry name" value="EF_hand_dom"/>
</dbReference>
<dbReference type="PANTHER" id="PTHR23048:SF0">
    <property type="entry name" value="CALMODULIN LIKE 3"/>
    <property type="match status" value="1"/>
</dbReference>
<dbReference type="PANTHER" id="PTHR23048">
    <property type="entry name" value="MYOSIN LIGHT CHAIN 1, 3"/>
    <property type="match status" value="1"/>
</dbReference>
<dbReference type="Pfam" id="PF13499">
    <property type="entry name" value="EF-hand_7"/>
    <property type="match status" value="2"/>
</dbReference>
<dbReference type="SMART" id="SM00054">
    <property type="entry name" value="EFh"/>
    <property type="match status" value="4"/>
</dbReference>
<dbReference type="SUPFAM" id="SSF47473">
    <property type="entry name" value="EF-hand"/>
    <property type="match status" value="1"/>
</dbReference>
<dbReference type="PROSITE" id="PS00018">
    <property type="entry name" value="EF_HAND_1"/>
    <property type="match status" value="2"/>
</dbReference>
<dbReference type="PROSITE" id="PS50222">
    <property type="entry name" value="EF_HAND_2"/>
    <property type="match status" value="4"/>
</dbReference>
<accession>P21797</accession>
<name>TNNC1_BALNU</name>
<feature type="chain" id="PRO_0000073682" description="Troponin C, isoform 1">
    <location>
        <begin position="1"/>
        <end position="158"/>
    </location>
</feature>
<feature type="domain" description="EF-hand 1" evidence="1">
    <location>
        <begin position="15"/>
        <end position="50"/>
    </location>
</feature>
<feature type="domain" description="EF-hand 2" evidence="1">
    <location>
        <begin position="51"/>
        <end position="86"/>
    </location>
</feature>
<feature type="domain" description="EF-hand 3" evidence="1">
    <location>
        <begin position="91"/>
        <end position="126"/>
    </location>
</feature>
<feature type="domain" description="EF-hand 4" evidence="1">
    <location>
        <begin position="127"/>
        <end position="158"/>
    </location>
</feature>
<feature type="binding site" evidence="1">
    <location>
        <position position="64"/>
    </location>
    <ligand>
        <name>Ca(2+)</name>
        <dbReference type="ChEBI" id="CHEBI:29108"/>
        <label>1</label>
    </ligand>
</feature>
<feature type="binding site" evidence="1">
    <location>
        <position position="66"/>
    </location>
    <ligand>
        <name>Ca(2+)</name>
        <dbReference type="ChEBI" id="CHEBI:29108"/>
        <label>1</label>
    </ligand>
</feature>
<feature type="binding site" evidence="1">
    <location>
        <position position="68"/>
    </location>
    <ligand>
        <name>Ca(2+)</name>
        <dbReference type="ChEBI" id="CHEBI:29108"/>
        <label>1</label>
    </ligand>
</feature>
<feature type="binding site" evidence="1">
    <location>
        <position position="70"/>
    </location>
    <ligand>
        <name>Ca(2+)</name>
        <dbReference type="ChEBI" id="CHEBI:29108"/>
        <label>1</label>
    </ligand>
</feature>
<feature type="binding site" evidence="1">
    <location>
        <position position="75"/>
    </location>
    <ligand>
        <name>Ca(2+)</name>
        <dbReference type="ChEBI" id="CHEBI:29108"/>
        <label>1</label>
    </ligand>
</feature>
<feature type="binding site" evidence="1">
    <location>
        <position position="140"/>
    </location>
    <ligand>
        <name>Ca(2+)</name>
        <dbReference type="ChEBI" id="CHEBI:29108"/>
        <label>2</label>
    </ligand>
</feature>
<feature type="binding site" evidence="1">
    <location>
        <position position="142"/>
    </location>
    <ligand>
        <name>Ca(2+)</name>
        <dbReference type="ChEBI" id="CHEBI:29108"/>
        <label>2</label>
    </ligand>
</feature>
<feature type="binding site" evidence="1">
    <location>
        <position position="144"/>
    </location>
    <ligand>
        <name>Ca(2+)</name>
        <dbReference type="ChEBI" id="CHEBI:29108"/>
        <label>2</label>
    </ligand>
</feature>
<feature type="binding site" evidence="1">
    <location>
        <position position="146"/>
    </location>
    <ligand>
        <name>Ca(2+)</name>
        <dbReference type="ChEBI" id="CHEBI:29108"/>
        <label>2</label>
    </ligand>
</feature>
<feature type="binding site" evidence="1">
    <location>
        <position position="151"/>
    </location>
    <ligand>
        <name>Ca(2+)</name>
        <dbReference type="ChEBI" id="CHEBI:29108"/>
        <label>2</label>
    </ligand>
</feature>
<feature type="modified residue" description="N-acetylserine" evidence="2">
    <location>
        <position position="1"/>
    </location>
</feature>
<evidence type="ECO:0000255" key="1">
    <source>
        <dbReference type="PROSITE-ProRule" id="PRU00448"/>
    </source>
</evidence>
<evidence type="ECO:0000269" key="2">
    <source>
    </source>
</evidence>
<evidence type="ECO:0000305" key="3"/>